<name>TS7FN_CANSA</name>
<feature type="chain" id="PRO_0000460901" description="Delta-selinene synthase TPS7FN">
    <location>
        <begin position="1"/>
        <end position="551"/>
    </location>
</feature>
<feature type="short sequence motif" description="DDXXD motif" evidence="2">
    <location>
        <begin position="303"/>
        <end position="307"/>
    </location>
</feature>
<feature type="binding site" evidence="2">
    <location>
        <position position="266"/>
    </location>
    <ligand>
        <name>(2E,6E)-farnesyl diphosphate</name>
        <dbReference type="ChEBI" id="CHEBI:175763"/>
    </ligand>
</feature>
<feature type="binding site" evidence="2">
    <location>
        <position position="303"/>
    </location>
    <ligand>
        <name>(2E,6E)-farnesyl diphosphate</name>
        <dbReference type="ChEBI" id="CHEBI:175763"/>
    </ligand>
</feature>
<feature type="binding site" evidence="2">
    <location>
        <position position="303"/>
    </location>
    <ligand>
        <name>Mg(2+)</name>
        <dbReference type="ChEBI" id="CHEBI:18420"/>
        <label>1</label>
    </ligand>
</feature>
<feature type="binding site" evidence="2">
    <location>
        <position position="303"/>
    </location>
    <ligand>
        <name>Mg(2+)</name>
        <dbReference type="ChEBI" id="CHEBI:18420"/>
        <label>2</label>
    </ligand>
</feature>
<feature type="binding site" evidence="2">
    <location>
        <position position="307"/>
    </location>
    <ligand>
        <name>(2E,6E)-farnesyl diphosphate</name>
        <dbReference type="ChEBI" id="CHEBI:175763"/>
    </ligand>
</feature>
<feature type="binding site" evidence="2">
    <location>
        <position position="307"/>
    </location>
    <ligand>
        <name>Mg(2+)</name>
        <dbReference type="ChEBI" id="CHEBI:18420"/>
        <label>1</label>
    </ligand>
</feature>
<feature type="binding site" evidence="2">
    <location>
        <position position="307"/>
    </location>
    <ligand>
        <name>Mg(2+)</name>
        <dbReference type="ChEBI" id="CHEBI:18420"/>
        <label>2</label>
    </ligand>
</feature>
<feature type="binding site" evidence="2">
    <location>
        <position position="444"/>
    </location>
    <ligand>
        <name>(2E,6E)-farnesyl diphosphate</name>
        <dbReference type="ChEBI" id="CHEBI:175763"/>
    </ligand>
</feature>
<feature type="binding site" evidence="2">
    <location>
        <position position="447"/>
    </location>
    <ligand>
        <name>(2E,6E)-farnesyl diphosphate</name>
        <dbReference type="ChEBI" id="CHEBI:175763"/>
    </ligand>
</feature>
<feature type="binding site" evidence="2">
    <location>
        <position position="447"/>
    </location>
    <ligand>
        <name>Mg(2+)</name>
        <dbReference type="ChEBI" id="CHEBI:18420"/>
        <label>3</label>
    </ligand>
</feature>
<feature type="binding site" evidence="2">
    <location>
        <position position="451"/>
    </location>
    <ligand>
        <name>Mg(2+)</name>
        <dbReference type="ChEBI" id="CHEBI:18420"/>
        <label>3</label>
    </ligand>
</feature>
<feature type="binding site" evidence="2">
    <location>
        <position position="455"/>
    </location>
    <ligand>
        <name>Mg(2+)</name>
        <dbReference type="ChEBI" id="CHEBI:18420"/>
        <label>3</label>
    </ligand>
</feature>
<accession>A0A1V0QSF6</accession>
<organism>
    <name type="scientific">Cannabis sativa</name>
    <name type="common">Hemp</name>
    <name type="synonym">Marijuana</name>
    <dbReference type="NCBI Taxonomy" id="3483"/>
    <lineage>
        <taxon>Eukaryota</taxon>
        <taxon>Viridiplantae</taxon>
        <taxon>Streptophyta</taxon>
        <taxon>Embryophyta</taxon>
        <taxon>Tracheophyta</taxon>
        <taxon>Spermatophyta</taxon>
        <taxon>Magnoliopsida</taxon>
        <taxon>eudicotyledons</taxon>
        <taxon>Gunneridae</taxon>
        <taxon>Pentapetalae</taxon>
        <taxon>rosids</taxon>
        <taxon>fabids</taxon>
        <taxon>Rosales</taxon>
        <taxon>Cannabaceae</taxon>
        <taxon>Cannabis</taxon>
    </lineage>
</organism>
<reference key="1">
    <citation type="journal article" date="2017" name="PLoS ONE">
        <title>Terpene synthases from Cannabis sativa.</title>
        <authorList>
            <person name="Booth J.K."/>
            <person name="Page J.E."/>
            <person name="Bohlmann J."/>
        </authorList>
    </citation>
    <scope>NUCLEOTIDE SEQUENCE [MRNA]</scope>
    <scope>FUNCTION</scope>
    <scope>CATALYTIC ACTIVITY</scope>
    <scope>PATHWAY</scope>
    <source>
        <strain>cv. Finola</strain>
    </source>
</reference>
<protein>
    <recommendedName>
        <fullName evidence="4">Delta-selinene synthase TPS7FN</fullName>
        <ecNumber evidence="3">4.2.3.-</ecNumber>
    </recommendedName>
    <alternativeName>
        <fullName evidence="4">(-)-limonene synthase TPS7FN</fullName>
        <shortName evidence="4">(-)-(4S)-limonene synthase</shortName>
        <ecNumber evidence="3">4.2.3.16</ecNumber>
    </alternativeName>
    <alternativeName>
        <fullName evidence="4">Myrcene synthase TPS7FN</fullName>
        <ecNumber evidence="3">4.2.3.15</ecNumber>
    </alternativeName>
    <alternativeName>
        <fullName evidence="4">Selina-6-en-4-ol synthase TPS7FN</fullName>
        <ecNumber evidence="3">4.2.3.-</ecNumber>
    </alternativeName>
    <alternativeName>
        <fullName evidence="4">Terpene synthase 7FN</fullName>
        <shortName evidence="4">CsTPS7FN</shortName>
    </alternativeName>
</protein>
<gene>
    <name evidence="4" type="primary">TPS7FN</name>
</gene>
<keyword id="KW-0456">Lyase</keyword>
<keyword id="KW-0460">Magnesium</keyword>
<keyword id="KW-0479">Metal-binding</keyword>
<sequence>MSSQVLASSQLSDKIIARPTTNFHPSIWGDRFLHYNVSEQDLVCKQERIEELIQVVKKEILSSNHDQLKLIDNLQRLGLSHHFESEIEKLLEQLSIGTHHQNHQDLHDASLWFRLLRQHGLNVSSSIFEKFKDDEGNFKKSLITDVSGLLSLYEASHLSYVGESILDEALAFTTTHLKSIVANSKNHPLSHQISKALERPLRMTLERLHARFYISIYEKDASHNKVLLELAKLDFNLLQCFHKKELSEIVRWWKEHEFAKKFPFARDRMVELYFWILGVYYEPKYSRARKLLTKVIALTSITDDIYDAYGTIDELQLLTKAMQRWDINCMDKLEPEYLKTYYKVMLESYEEFEKELKKEELYKLEYAKEEMKRIIRAYFEEARWLNEGYLPSFDEHLRVSYISSGYVLLIATSYVGMDDIVTHETLNWLSKDPKIVSASTLLSRFMDDIGSRKFEQERNHVLSTVECYMKQYEVSEEEAVKELNKRVANCWKEINEDFIRPTSVPFPILFRIINLTKTADFMYREGGDQYTHVGKMLKDSIAALLIDPIPL</sequence>
<proteinExistence type="evidence at protein level"/>
<comment type="function">
    <text evidence="3">Involved in sesquiterpene olefins biosynthesis, constituants of cannabinoids and terpenoids-rich resins (PubMed:28355238). Catalyzes mainly the conversion of (2E)-farnesyl diphosphate to delta-selinene, and also produces minor products such as selina-6-en-4-ol (PubMed:28355238). Can also use (2E)-geranyl diphosphate as substrate with low efficiency, producing minor amounts of myrcene and limonene (PubMed:28355238).</text>
</comment>
<comment type="catalytic activity">
    <reaction evidence="3">
        <text>(2E,6E)-farnesyl diphosphate = delta-selinene + diphosphate</text>
        <dbReference type="Rhea" id="RHEA:25440"/>
        <dbReference type="ChEBI" id="CHEBI:33019"/>
        <dbReference type="ChEBI" id="CHEBI:49278"/>
        <dbReference type="ChEBI" id="CHEBI:175763"/>
    </reaction>
    <physiologicalReaction direction="left-to-right" evidence="3">
        <dbReference type="Rhea" id="RHEA:25441"/>
    </physiologicalReaction>
</comment>
<comment type="catalytic activity">
    <reaction evidence="3">
        <text>(2E)-geranyl diphosphate = beta-myrcene + diphosphate</text>
        <dbReference type="Rhea" id="RHEA:16965"/>
        <dbReference type="ChEBI" id="CHEBI:17221"/>
        <dbReference type="ChEBI" id="CHEBI:33019"/>
        <dbReference type="ChEBI" id="CHEBI:58057"/>
        <dbReference type="EC" id="4.2.3.15"/>
    </reaction>
    <physiologicalReaction direction="left-to-right" evidence="3">
        <dbReference type="Rhea" id="RHEA:16966"/>
    </physiologicalReaction>
</comment>
<comment type="catalytic activity">
    <reaction evidence="3">
        <text>(2E)-geranyl diphosphate = (4S)-limonene + diphosphate</text>
        <dbReference type="Rhea" id="RHEA:12869"/>
        <dbReference type="ChEBI" id="CHEBI:15383"/>
        <dbReference type="ChEBI" id="CHEBI:33019"/>
        <dbReference type="ChEBI" id="CHEBI:58057"/>
        <dbReference type="EC" id="4.2.3.16"/>
    </reaction>
    <physiologicalReaction direction="left-to-right" evidence="3">
        <dbReference type="Rhea" id="RHEA:12870"/>
    </physiologicalReaction>
</comment>
<comment type="catalytic activity">
    <reaction evidence="3">
        <text>(2E,6E)-farnesyl diphosphate + H2O = selina-6-en-4-ol + diphosphate</text>
        <dbReference type="Rhea" id="RHEA:80403"/>
        <dbReference type="ChEBI" id="CHEBI:15377"/>
        <dbReference type="ChEBI" id="CHEBI:33019"/>
        <dbReference type="ChEBI" id="CHEBI:175763"/>
        <dbReference type="ChEBI" id="CHEBI:231497"/>
    </reaction>
    <physiologicalReaction direction="left-to-right" evidence="3">
        <dbReference type="Rhea" id="RHEA:80404"/>
    </physiologicalReaction>
</comment>
<comment type="cofactor">
    <cofactor evidence="1">
        <name>Mg(2+)</name>
        <dbReference type="ChEBI" id="CHEBI:18420"/>
    </cofactor>
    <cofactor evidence="1">
        <name>Mn(2+)</name>
        <dbReference type="ChEBI" id="CHEBI:29035"/>
    </cofactor>
    <text evidence="1">Binds 3 Mg(2+) or Mn(2+) ions per subunit.</text>
</comment>
<comment type="pathway">
    <text evidence="3">Secondary metabolite biosynthesis; terpenoid biosynthesis.</text>
</comment>
<comment type="domain">
    <text evidence="2">The Asp-Asp-Xaa-Xaa-Asp/Glu (DDXXD/E) motif is important for the catalytic activity, presumably through binding to Mg(2+).</text>
</comment>
<comment type="similarity">
    <text evidence="5">Belongs to the terpene synthase family. Tpsb subfamily.</text>
</comment>
<evidence type="ECO:0000250" key="1">
    <source>
        <dbReference type="UniProtKB" id="A0A1C9J6A7"/>
    </source>
</evidence>
<evidence type="ECO:0000250" key="2">
    <source>
        <dbReference type="UniProtKB" id="Q40577"/>
    </source>
</evidence>
<evidence type="ECO:0000269" key="3">
    <source>
    </source>
</evidence>
<evidence type="ECO:0000303" key="4">
    <source>
    </source>
</evidence>
<evidence type="ECO:0000305" key="5"/>
<dbReference type="EC" id="4.2.3.-" evidence="3"/>
<dbReference type="EC" id="4.2.3.16" evidence="3"/>
<dbReference type="EC" id="4.2.3.15" evidence="3"/>
<dbReference type="EMBL" id="KY014554">
    <property type="protein sequence ID" value="ARE72250.1"/>
    <property type="molecule type" value="mRNA"/>
</dbReference>
<dbReference type="SMR" id="A0A1V0QSF6"/>
<dbReference type="UniPathway" id="UPA00213"/>
<dbReference type="Proteomes" id="UP000596661">
    <property type="component" value="Unplaced"/>
</dbReference>
<dbReference type="GO" id="GO:0000287">
    <property type="term" value="F:magnesium ion binding"/>
    <property type="evidence" value="ECO:0007669"/>
    <property type="project" value="InterPro"/>
</dbReference>
<dbReference type="GO" id="GO:0010333">
    <property type="term" value="F:terpene synthase activity"/>
    <property type="evidence" value="ECO:0007669"/>
    <property type="project" value="InterPro"/>
</dbReference>
<dbReference type="GO" id="GO:0016102">
    <property type="term" value="P:diterpenoid biosynthetic process"/>
    <property type="evidence" value="ECO:0007669"/>
    <property type="project" value="InterPro"/>
</dbReference>
<dbReference type="CDD" id="cd00684">
    <property type="entry name" value="Terpene_cyclase_plant_C1"/>
    <property type="match status" value="1"/>
</dbReference>
<dbReference type="FunFam" id="1.10.600.10:FF:000007">
    <property type="entry name" value="Isoprene synthase, chloroplastic"/>
    <property type="match status" value="1"/>
</dbReference>
<dbReference type="FunFam" id="1.50.10.130:FF:000001">
    <property type="entry name" value="Isoprene synthase, chloroplastic"/>
    <property type="match status" value="1"/>
</dbReference>
<dbReference type="Gene3D" id="1.10.600.10">
    <property type="entry name" value="Farnesyl Diphosphate Synthase"/>
    <property type="match status" value="1"/>
</dbReference>
<dbReference type="Gene3D" id="1.50.10.130">
    <property type="entry name" value="Terpene synthase, N-terminal domain"/>
    <property type="match status" value="1"/>
</dbReference>
<dbReference type="InterPro" id="IPR008949">
    <property type="entry name" value="Isoprenoid_synthase_dom_sf"/>
</dbReference>
<dbReference type="InterPro" id="IPR034741">
    <property type="entry name" value="Terpene_cyclase-like_1_C"/>
</dbReference>
<dbReference type="InterPro" id="IPR044814">
    <property type="entry name" value="Terpene_cyclase_plant_C1"/>
</dbReference>
<dbReference type="InterPro" id="IPR001906">
    <property type="entry name" value="Terpene_synth_N"/>
</dbReference>
<dbReference type="InterPro" id="IPR036965">
    <property type="entry name" value="Terpene_synth_N_sf"/>
</dbReference>
<dbReference type="InterPro" id="IPR050148">
    <property type="entry name" value="Terpene_synthase-like"/>
</dbReference>
<dbReference type="InterPro" id="IPR005630">
    <property type="entry name" value="Terpene_synthase_metal-bd"/>
</dbReference>
<dbReference type="InterPro" id="IPR008930">
    <property type="entry name" value="Terpenoid_cyclase/PrenylTrfase"/>
</dbReference>
<dbReference type="PANTHER" id="PTHR31225:SF93">
    <property type="entry name" value="ALPHA-HUMULENE_(-)-(E)-BETA-CARYOPHYLLENE SYNTHASE"/>
    <property type="match status" value="1"/>
</dbReference>
<dbReference type="PANTHER" id="PTHR31225">
    <property type="entry name" value="OS04G0344100 PROTEIN-RELATED"/>
    <property type="match status" value="1"/>
</dbReference>
<dbReference type="Pfam" id="PF01397">
    <property type="entry name" value="Terpene_synth"/>
    <property type="match status" value="1"/>
</dbReference>
<dbReference type="Pfam" id="PF03936">
    <property type="entry name" value="Terpene_synth_C"/>
    <property type="match status" value="1"/>
</dbReference>
<dbReference type="SFLD" id="SFLDS00005">
    <property type="entry name" value="Isoprenoid_Synthase_Type_I"/>
    <property type="match status" value="1"/>
</dbReference>
<dbReference type="SFLD" id="SFLDG01019">
    <property type="entry name" value="Terpene_Cyclase_Like_1_C_Termi"/>
    <property type="match status" value="1"/>
</dbReference>
<dbReference type="SUPFAM" id="SSF48239">
    <property type="entry name" value="Terpenoid cyclases/Protein prenyltransferases"/>
    <property type="match status" value="1"/>
</dbReference>
<dbReference type="SUPFAM" id="SSF48576">
    <property type="entry name" value="Terpenoid synthases"/>
    <property type="match status" value="1"/>
</dbReference>